<reference key="1">
    <citation type="journal article" date="1998" name="Science">
        <title>Complete genome sequence of Treponema pallidum, the syphilis spirochete.</title>
        <authorList>
            <person name="Fraser C.M."/>
            <person name="Norris S.J."/>
            <person name="Weinstock G.M."/>
            <person name="White O."/>
            <person name="Sutton G.G."/>
            <person name="Dodson R.J."/>
            <person name="Gwinn M.L."/>
            <person name="Hickey E.K."/>
            <person name="Clayton R.A."/>
            <person name="Ketchum K.A."/>
            <person name="Sodergren E."/>
            <person name="Hardham J.M."/>
            <person name="McLeod M.P."/>
            <person name="Salzberg S.L."/>
            <person name="Peterson J.D."/>
            <person name="Khalak H.G."/>
            <person name="Richardson D.L."/>
            <person name="Howell J.K."/>
            <person name="Chidambaram M."/>
            <person name="Utterback T.R."/>
            <person name="McDonald L.A."/>
            <person name="Artiach P."/>
            <person name="Bowman C."/>
            <person name="Cotton M.D."/>
            <person name="Fujii C."/>
            <person name="Garland S.A."/>
            <person name="Hatch B."/>
            <person name="Horst K."/>
            <person name="Roberts K.M."/>
            <person name="Sandusky M."/>
            <person name="Weidman J.F."/>
            <person name="Smith H.O."/>
            <person name="Venter J.C."/>
        </authorList>
    </citation>
    <scope>NUCLEOTIDE SEQUENCE [LARGE SCALE GENOMIC DNA]</scope>
    <source>
        <strain>Nichols</strain>
    </source>
</reference>
<organism>
    <name type="scientific">Treponema pallidum (strain Nichols)</name>
    <dbReference type="NCBI Taxonomy" id="243276"/>
    <lineage>
        <taxon>Bacteria</taxon>
        <taxon>Pseudomonadati</taxon>
        <taxon>Spirochaetota</taxon>
        <taxon>Spirochaetia</taxon>
        <taxon>Spirochaetales</taxon>
        <taxon>Treponemataceae</taxon>
        <taxon>Treponema</taxon>
    </lineage>
</organism>
<gene>
    <name type="primary">hprK</name>
    <name type="synonym">ptsK</name>
    <name type="ordered locus">TP_0591</name>
</gene>
<keyword id="KW-0067">ATP-binding</keyword>
<keyword id="KW-0418">Kinase</keyword>
<keyword id="KW-0460">Magnesium</keyword>
<keyword id="KW-0479">Metal-binding</keyword>
<keyword id="KW-0511">Multifunctional enzyme</keyword>
<keyword id="KW-0547">Nucleotide-binding</keyword>
<keyword id="KW-1185">Reference proteome</keyword>
<keyword id="KW-0723">Serine/threonine-protein kinase</keyword>
<keyword id="KW-0808">Transferase</keyword>
<proteinExistence type="inferred from homology"/>
<dbReference type="EC" id="2.7.11.-"/>
<dbReference type="EC" id="2.7.4.-"/>
<dbReference type="EMBL" id="AE000520">
    <property type="protein sequence ID" value="AAC65566.1"/>
    <property type="molecule type" value="Genomic_DNA"/>
</dbReference>
<dbReference type="PIR" id="H71305">
    <property type="entry name" value="H71305"/>
</dbReference>
<dbReference type="SMR" id="O83600"/>
<dbReference type="IntAct" id="O83600">
    <property type="interactions" value="7"/>
</dbReference>
<dbReference type="STRING" id="243276.TP_0591"/>
<dbReference type="EnsemblBacteria" id="AAC65566">
    <property type="protein sequence ID" value="AAC65566"/>
    <property type="gene ID" value="TP_0591"/>
</dbReference>
<dbReference type="KEGG" id="tpa:TP_0591"/>
<dbReference type="eggNOG" id="COG1493">
    <property type="taxonomic scope" value="Bacteria"/>
</dbReference>
<dbReference type="HOGENOM" id="CLU_052030_0_1_12"/>
<dbReference type="Proteomes" id="UP000000811">
    <property type="component" value="Chromosome"/>
</dbReference>
<dbReference type="GO" id="GO:0005524">
    <property type="term" value="F:ATP binding"/>
    <property type="evidence" value="ECO:0007669"/>
    <property type="project" value="UniProtKB-UniRule"/>
</dbReference>
<dbReference type="GO" id="GO:0000287">
    <property type="term" value="F:magnesium ion binding"/>
    <property type="evidence" value="ECO:0007669"/>
    <property type="project" value="UniProtKB-UniRule"/>
</dbReference>
<dbReference type="GO" id="GO:0000155">
    <property type="term" value="F:phosphorelay sensor kinase activity"/>
    <property type="evidence" value="ECO:0007669"/>
    <property type="project" value="InterPro"/>
</dbReference>
<dbReference type="GO" id="GO:0004674">
    <property type="term" value="F:protein serine/threonine kinase activity"/>
    <property type="evidence" value="ECO:0007669"/>
    <property type="project" value="UniProtKB-KW"/>
</dbReference>
<dbReference type="GO" id="GO:0004712">
    <property type="term" value="F:protein serine/threonine/tyrosine kinase activity"/>
    <property type="evidence" value="ECO:0007669"/>
    <property type="project" value="UniProtKB-UniRule"/>
</dbReference>
<dbReference type="GO" id="GO:0006109">
    <property type="term" value="P:regulation of carbohydrate metabolic process"/>
    <property type="evidence" value="ECO:0007669"/>
    <property type="project" value="UniProtKB-UniRule"/>
</dbReference>
<dbReference type="CDD" id="cd01918">
    <property type="entry name" value="HprK_C"/>
    <property type="match status" value="1"/>
</dbReference>
<dbReference type="FunFam" id="3.40.50.300:FF:000174">
    <property type="entry name" value="HPr kinase/phosphorylase"/>
    <property type="match status" value="1"/>
</dbReference>
<dbReference type="Gene3D" id="3.40.1390.20">
    <property type="entry name" value="HprK N-terminal domain-like"/>
    <property type="match status" value="1"/>
</dbReference>
<dbReference type="Gene3D" id="3.40.50.300">
    <property type="entry name" value="P-loop containing nucleotide triphosphate hydrolases"/>
    <property type="match status" value="1"/>
</dbReference>
<dbReference type="HAMAP" id="MF_01249">
    <property type="entry name" value="HPr_kinase"/>
    <property type="match status" value="1"/>
</dbReference>
<dbReference type="InterPro" id="IPR003755">
    <property type="entry name" value="HPr(Ser)_kin/Pase"/>
</dbReference>
<dbReference type="InterPro" id="IPR011104">
    <property type="entry name" value="Hpr_kin/Pase_C"/>
</dbReference>
<dbReference type="InterPro" id="IPR011126">
    <property type="entry name" value="Hpr_kin/Pase_Hpr_N"/>
</dbReference>
<dbReference type="InterPro" id="IPR027417">
    <property type="entry name" value="P-loop_NTPase"/>
</dbReference>
<dbReference type="InterPro" id="IPR028979">
    <property type="entry name" value="Ser_kin/Pase_Hpr-like_N_sf"/>
</dbReference>
<dbReference type="NCBIfam" id="TIGR00679">
    <property type="entry name" value="hpr-ser"/>
    <property type="match status" value="1"/>
</dbReference>
<dbReference type="PANTHER" id="PTHR30305:SF1">
    <property type="entry name" value="HPR KINASE_PHOSPHORYLASE"/>
    <property type="match status" value="1"/>
</dbReference>
<dbReference type="PANTHER" id="PTHR30305">
    <property type="entry name" value="PROTEIN YJDM-RELATED"/>
    <property type="match status" value="1"/>
</dbReference>
<dbReference type="Pfam" id="PF07475">
    <property type="entry name" value="Hpr_kinase_C"/>
    <property type="match status" value="1"/>
</dbReference>
<dbReference type="Pfam" id="PF02603">
    <property type="entry name" value="Hpr_kinase_N"/>
    <property type="match status" value="1"/>
</dbReference>
<dbReference type="SUPFAM" id="SSF75138">
    <property type="entry name" value="HprK N-terminal domain-like"/>
    <property type="match status" value="1"/>
</dbReference>
<dbReference type="SUPFAM" id="SSF53795">
    <property type="entry name" value="PEP carboxykinase-like"/>
    <property type="match status" value="1"/>
</dbReference>
<accession>O83600</accession>
<protein>
    <recommendedName>
        <fullName>HPr kinase/phosphorylase</fullName>
        <shortName>HPrK/P</shortName>
        <ecNumber>2.7.11.-</ecNumber>
        <ecNumber>2.7.4.-</ecNumber>
    </recommendedName>
    <alternativeName>
        <fullName>HPr(Ser) kinase/phosphorylase</fullName>
    </alternativeName>
</protein>
<feature type="chain" id="PRO_0000059004" description="HPr kinase/phosphorylase">
    <location>
        <begin position="1"/>
        <end position="319"/>
    </location>
</feature>
<feature type="region of interest" description="Important for the catalytic mechanism of both phosphorylation and dephosphorylation" evidence="1">
    <location>
        <begin position="201"/>
        <end position="210"/>
    </location>
</feature>
<feature type="region of interest" description="Important for the catalytic mechanism of dephosphorylation" evidence="1">
    <location>
        <begin position="264"/>
        <end position="269"/>
    </location>
</feature>
<feature type="active site" evidence="1">
    <location>
        <position position="137"/>
    </location>
</feature>
<feature type="active site" evidence="1">
    <location>
        <position position="158"/>
    </location>
</feature>
<feature type="active site" description="Proton acceptor; for phosphorylation activity. Proton donor; for dephosphorylation activity" evidence="1">
    <location>
        <position position="176"/>
    </location>
</feature>
<feature type="active site" evidence="1">
    <location>
        <position position="243"/>
    </location>
</feature>
<feature type="binding site" evidence="1">
    <location>
        <begin position="152"/>
        <end position="159"/>
    </location>
    <ligand>
        <name>ATP</name>
        <dbReference type="ChEBI" id="CHEBI:30616"/>
    </ligand>
</feature>
<feature type="binding site" evidence="2">
    <location>
        <position position="159"/>
    </location>
    <ligand>
        <name>Mg(2+)</name>
        <dbReference type="ChEBI" id="CHEBI:18420"/>
    </ligand>
</feature>
<feature type="binding site" evidence="2">
    <location>
        <position position="202"/>
    </location>
    <ligand>
        <name>Mg(2+)</name>
        <dbReference type="ChEBI" id="CHEBI:18420"/>
    </ligand>
</feature>
<name>HPRK_TREPA</name>
<sequence length="319" mass="35548">MLKLDLKERDSLDLRCIAGHHGLANPITISDLNRPGLVLSGFFDFVAYRRIQLFGRGEHAYLLALLEQGRYGAIEKMFTFDLPCCIFSHGITPPEKFLHLAEPSSCPILVTRLTSSELSLRLMRVLSNIFAPTIALHGVLVEVYGVGILISGDSGVGKSETALELIERGHRLVADDLVEISCVNGNSLIGRGVHKSIGHHMEIRGLGIINITQLYGVGSIRERKEIQMVVQLEEWNSSKAYDRLGTQELNTTILDVSVPLIEIPVRPGRNIPIILETAAMNERLKRMGYFSAKEFNQSVLKLMEQNAAHAPYYRPDDTY</sequence>
<comment type="function">
    <text evidence="1">Catalyzes the ATP- as well as the pyrophosphate-dependent phosphorylation of a specific serine residue in HPr, a phosphocarrier protein of the phosphoenolpyruvate-dependent sugar phosphotransferase system (PTS). HprK/P also catalyzes the pyrophosphate-producing, inorganic phosphate-dependent dephosphorylation (phosphorolysis) of seryl-phosphorylated HPr (P-Ser-HPr) (By similarity).</text>
</comment>
<comment type="catalytic activity">
    <reaction>
        <text>[HPr protein]-L-serine + ATP = [HPr protein]-O-phospho-L-serine + ADP + H(+)</text>
        <dbReference type="Rhea" id="RHEA:46600"/>
        <dbReference type="Rhea" id="RHEA-COMP:11602"/>
        <dbReference type="Rhea" id="RHEA-COMP:11603"/>
        <dbReference type="ChEBI" id="CHEBI:15378"/>
        <dbReference type="ChEBI" id="CHEBI:29999"/>
        <dbReference type="ChEBI" id="CHEBI:30616"/>
        <dbReference type="ChEBI" id="CHEBI:83421"/>
        <dbReference type="ChEBI" id="CHEBI:456216"/>
    </reaction>
</comment>
<comment type="catalytic activity">
    <reaction>
        <text>[HPr protein]-O-phospho-L-serine + phosphate + H(+) = [HPr protein]-L-serine + diphosphate</text>
        <dbReference type="Rhea" id="RHEA:46604"/>
        <dbReference type="Rhea" id="RHEA-COMP:11602"/>
        <dbReference type="Rhea" id="RHEA-COMP:11603"/>
        <dbReference type="ChEBI" id="CHEBI:15378"/>
        <dbReference type="ChEBI" id="CHEBI:29999"/>
        <dbReference type="ChEBI" id="CHEBI:33019"/>
        <dbReference type="ChEBI" id="CHEBI:43474"/>
        <dbReference type="ChEBI" id="CHEBI:83421"/>
    </reaction>
</comment>
<comment type="cofactor">
    <cofactor evidence="1">
        <name>Mg(2+)</name>
        <dbReference type="ChEBI" id="CHEBI:18420"/>
    </cofactor>
</comment>
<comment type="subunit">
    <text evidence="1">Homohexamer.</text>
</comment>
<comment type="domain">
    <text evidence="1">The Walker A ATP-binding motif also binds Pi and PPi.</text>
</comment>
<comment type="miscellaneous">
    <text evidence="1">Both phosphorylation and phosphorolysis are carried out by the same active site and suggest a common mechanism for both reactions.</text>
</comment>
<comment type="similarity">
    <text evidence="3">Belongs to the HPrK/P family.</text>
</comment>
<evidence type="ECO:0000250" key="1"/>
<evidence type="ECO:0000255" key="2"/>
<evidence type="ECO:0000305" key="3"/>